<name>TRMD_STRP3</name>
<comment type="function">
    <text evidence="1">Specifically methylates guanosine-37 in various tRNAs.</text>
</comment>
<comment type="catalytic activity">
    <reaction>
        <text>guanosine(37) in tRNA + S-adenosyl-L-methionine = N(1)-methylguanosine(37) in tRNA + S-adenosyl-L-homocysteine + H(+)</text>
        <dbReference type="Rhea" id="RHEA:36899"/>
        <dbReference type="Rhea" id="RHEA-COMP:10145"/>
        <dbReference type="Rhea" id="RHEA-COMP:10147"/>
        <dbReference type="ChEBI" id="CHEBI:15378"/>
        <dbReference type="ChEBI" id="CHEBI:57856"/>
        <dbReference type="ChEBI" id="CHEBI:59789"/>
        <dbReference type="ChEBI" id="CHEBI:73542"/>
        <dbReference type="ChEBI" id="CHEBI:74269"/>
        <dbReference type="EC" id="2.1.1.228"/>
    </reaction>
</comment>
<comment type="subunit">
    <text evidence="1">Homodimer.</text>
</comment>
<comment type="subcellular location">
    <subcellularLocation>
        <location evidence="2">Cytoplasm</location>
    </subcellularLocation>
</comment>
<comment type="similarity">
    <text evidence="2">Belongs to the RNA methyltransferase TrmD family.</text>
</comment>
<evidence type="ECO:0000250" key="1"/>
<evidence type="ECO:0000305" key="2"/>
<protein>
    <recommendedName>
        <fullName>tRNA (guanine-N(1)-)-methyltransferase</fullName>
        <ecNumber>2.1.1.228</ecNumber>
    </recommendedName>
    <alternativeName>
        <fullName>M1G-methyltransferase</fullName>
    </alternativeName>
    <alternativeName>
        <fullName>tRNA [GM37] methyltransferase</fullName>
    </alternativeName>
</protein>
<dbReference type="EC" id="2.1.1.228"/>
<dbReference type="EMBL" id="AE014074">
    <property type="protein sequence ID" value="AAM79181.1"/>
    <property type="molecule type" value="Genomic_DNA"/>
</dbReference>
<dbReference type="RefSeq" id="WP_002985053.1">
    <property type="nucleotide sequence ID" value="NC_004070.1"/>
</dbReference>
<dbReference type="SMR" id="P0DG20"/>
<dbReference type="GeneID" id="69901041"/>
<dbReference type="KEGG" id="spg:SpyM3_0574"/>
<dbReference type="HOGENOM" id="CLU_047363_0_1_9"/>
<dbReference type="Proteomes" id="UP000000564">
    <property type="component" value="Chromosome"/>
</dbReference>
<dbReference type="GO" id="GO:0005829">
    <property type="term" value="C:cytosol"/>
    <property type="evidence" value="ECO:0007669"/>
    <property type="project" value="TreeGrafter"/>
</dbReference>
<dbReference type="GO" id="GO:0052906">
    <property type="term" value="F:tRNA (guanine(37)-N1)-methyltransferase activity"/>
    <property type="evidence" value="ECO:0007669"/>
    <property type="project" value="UniProtKB-UniRule"/>
</dbReference>
<dbReference type="GO" id="GO:0002939">
    <property type="term" value="P:tRNA N1-guanine methylation"/>
    <property type="evidence" value="ECO:0007669"/>
    <property type="project" value="TreeGrafter"/>
</dbReference>
<dbReference type="CDD" id="cd18080">
    <property type="entry name" value="TrmD-like"/>
    <property type="match status" value="1"/>
</dbReference>
<dbReference type="FunFam" id="1.10.1270.20:FF:000001">
    <property type="entry name" value="tRNA (guanine-N(1)-)-methyltransferase"/>
    <property type="match status" value="1"/>
</dbReference>
<dbReference type="FunFam" id="3.40.1280.10:FF:000001">
    <property type="entry name" value="tRNA (guanine-N(1)-)-methyltransferase"/>
    <property type="match status" value="1"/>
</dbReference>
<dbReference type="Gene3D" id="3.40.1280.10">
    <property type="match status" value="1"/>
</dbReference>
<dbReference type="Gene3D" id="1.10.1270.20">
    <property type="entry name" value="tRNA(m1g37)methyltransferase, domain 2"/>
    <property type="match status" value="1"/>
</dbReference>
<dbReference type="HAMAP" id="MF_00605">
    <property type="entry name" value="TrmD"/>
    <property type="match status" value="1"/>
</dbReference>
<dbReference type="InterPro" id="IPR029028">
    <property type="entry name" value="Alpha/beta_knot_MTases"/>
</dbReference>
<dbReference type="InterPro" id="IPR023148">
    <property type="entry name" value="tRNA_m1G_MeTrfase_C_sf"/>
</dbReference>
<dbReference type="InterPro" id="IPR002649">
    <property type="entry name" value="tRNA_m1G_MeTrfase_TrmD"/>
</dbReference>
<dbReference type="InterPro" id="IPR029026">
    <property type="entry name" value="tRNA_m1G_MTases_N"/>
</dbReference>
<dbReference type="InterPro" id="IPR016009">
    <property type="entry name" value="tRNA_MeTrfase_TRMD/TRM10"/>
</dbReference>
<dbReference type="NCBIfam" id="NF000648">
    <property type="entry name" value="PRK00026.1"/>
    <property type="match status" value="1"/>
</dbReference>
<dbReference type="NCBIfam" id="TIGR00088">
    <property type="entry name" value="trmD"/>
    <property type="match status" value="1"/>
</dbReference>
<dbReference type="PANTHER" id="PTHR46417">
    <property type="entry name" value="TRNA (GUANINE-N(1)-)-METHYLTRANSFERASE"/>
    <property type="match status" value="1"/>
</dbReference>
<dbReference type="PANTHER" id="PTHR46417:SF1">
    <property type="entry name" value="TRNA (GUANINE-N(1)-)-METHYLTRANSFERASE"/>
    <property type="match status" value="1"/>
</dbReference>
<dbReference type="Pfam" id="PF01746">
    <property type="entry name" value="tRNA_m1G_MT"/>
    <property type="match status" value="1"/>
</dbReference>
<dbReference type="PIRSF" id="PIRSF000386">
    <property type="entry name" value="tRNA_mtase"/>
    <property type="match status" value="1"/>
</dbReference>
<dbReference type="SUPFAM" id="SSF75217">
    <property type="entry name" value="alpha/beta knot"/>
    <property type="match status" value="1"/>
</dbReference>
<sequence length="243" mass="27979">MKIDILTLFPEMFAPLEHSIVGKAKEKGLLDIHYHNFRDYAEKARHVDDEPYGGGQGMLLRAQPIFDTIEQIEAKKPRIILLDPAGKPFTQAYAEELALEEELIFICGHYEGYDERIKTLVTDEISLGDFVLTGGELAAMTMVDATVRLIPQVLGKESSHQDDSFSSGLLEYPQYTRPYDYRGMTVPDVLMSGHHERIRLWRLEESLRKTYLRRPDLLERYDFSEEERKLLDKIKEALGQGED</sequence>
<reference key="1">
    <citation type="journal article" date="2002" name="Proc. Natl. Acad. Sci. U.S.A.">
        <title>Genome sequence of a serotype M3 strain of group A Streptococcus: phage-encoded toxins, the high-virulence phenotype, and clone emergence.</title>
        <authorList>
            <person name="Beres S.B."/>
            <person name="Sylva G.L."/>
            <person name="Barbian K.D."/>
            <person name="Lei B."/>
            <person name="Hoff J.S."/>
            <person name="Mammarella N.D."/>
            <person name="Liu M.-Y."/>
            <person name="Smoot J.C."/>
            <person name="Porcella S.F."/>
            <person name="Parkins L.D."/>
            <person name="Campbell D.S."/>
            <person name="Smith T.M."/>
            <person name="McCormick J.K."/>
            <person name="Leung D.Y.M."/>
            <person name="Schlievert P.M."/>
            <person name="Musser J.M."/>
        </authorList>
    </citation>
    <scope>NUCLEOTIDE SEQUENCE [LARGE SCALE GENOMIC DNA]</scope>
    <source>
        <strain>ATCC BAA-595 / MGAS315</strain>
    </source>
</reference>
<proteinExistence type="inferred from homology"/>
<gene>
    <name type="primary">trmD</name>
    <name type="ordered locus">SpyM3_0574</name>
</gene>
<feature type="chain" id="PRO_0000060472" description="tRNA (guanine-N(1)-)-methyltransferase">
    <location>
        <begin position="1"/>
        <end position="243"/>
    </location>
</feature>
<feature type="binding site" evidence="1">
    <location>
        <position position="108"/>
    </location>
    <ligand>
        <name>S-adenosyl-L-methionine</name>
        <dbReference type="ChEBI" id="CHEBI:59789"/>
    </ligand>
</feature>
<feature type="binding site" evidence="1">
    <location>
        <begin position="127"/>
        <end position="132"/>
    </location>
    <ligand>
        <name>S-adenosyl-L-methionine</name>
        <dbReference type="ChEBI" id="CHEBI:59789"/>
    </ligand>
</feature>
<accession>P0DG20</accession>
<accession>Q8K7X3</accession>
<organism>
    <name type="scientific">Streptococcus pyogenes serotype M3 (strain ATCC BAA-595 / MGAS315)</name>
    <dbReference type="NCBI Taxonomy" id="198466"/>
    <lineage>
        <taxon>Bacteria</taxon>
        <taxon>Bacillati</taxon>
        <taxon>Bacillota</taxon>
        <taxon>Bacilli</taxon>
        <taxon>Lactobacillales</taxon>
        <taxon>Streptococcaceae</taxon>
        <taxon>Streptococcus</taxon>
    </lineage>
</organism>
<keyword id="KW-0963">Cytoplasm</keyword>
<keyword id="KW-0489">Methyltransferase</keyword>
<keyword id="KW-0949">S-adenosyl-L-methionine</keyword>
<keyword id="KW-0808">Transferase</keyword>
<keyword id="KW-0819">tRNA processing</keyword>